<reference key="1">
    <citation type="journal article" date="1996" name="Microbiology">
        <title>An essential role for actA in acid tolerance of Rhizobium meliloti.</title>
        <authorList>
            <person name="Tiwari R.P."/>
            <person name="Reeve W.G."/>
            <person name="Dilworth M.J."/>
            <person name="Glenn A.R."/>
        </authorList>
    </citation>
    <scope>NUCLEOTIDE SEQUENCE [GENOMIC DNA]</scope>
</reference>
<reference key="2">
    <citation type="submission" date="2007-06" db="EMBL/GenBank/DDBJ databases">
        <title>Complete sequence of Sinorhizobium medicae WSM419 chromosome.</title>
        <authorList>
            <consortium name="US DOE Joint Genome Institute"/>
            <person name="Copeland A."/>
            <person name="Lucas S."/>
            <person name="Lapidus A."/>
            <person name="Barry K."/>
            <person name="Glavina del Rio T."/>
            <person name="Dalin E."/>
            <person name="Tice H."/>
            <person name="Pitluck S."/>
            <person name="Chain P."/>
            <person name="Malfatti S."/>
            <person name="Shin M."/>
            <person name="Vergez L."/>
            <person name="Schmutz J."/>
            <person name="Larimer F."/>
            <person name="Land M."/>
            <person name="Hauser L."/>
            <person name="Kyrpides N."/>
            <person name="Mikhailova N."/>
            <person name="Reeve W.G."/>
            <person name="Richardson P."/>
        </authorList>
    </citation>
    <scope>NUCLEOTIDE SEQUENCE [LARGE SCALE GENOMIC DNA]</scope>
    <source>
        <strain>WSM419</strain>
    </source>
</reference>
<sequence>MIENKKKPNPIDIHVGSRIRLRRTMLGMSQEKLGESLGITFQQIQKYEKGTNRVGASRLQNISQILNVPVSFFFEDAPGDGGGTGPGMAEASSSNYVVDFLSSSEGLQLNRAFVKISDPKVRRKLVDLVKALAAEAESE</sequence>
<protein>
    <recommendedName>
        <fullName>Uncharacterized HTH-type transcriptional regulator Smed_0045</fullName>
    </recommendedName>
</protein>
<proteinExistence type="predicted"/>
<keyword id="KW-0238">DNA-binding</keyword>
<keyword id="KW-0804">Transcription</keyword>
<keyword id="KW-0805">Transcription regulation</keyword>
<gene>
    <name type="ordered locus">Smed_0045</name>
</gene>
<dbReference type="EMBL" id="L13845">
    <property type="protein sequence ID" value="AAB81868.1"/>
    <property type="molecule type" value="Genomic_DNA"/>
</dbReference>
<dbReference type="EMBL" id="CP000738">
    <property type="protein sequence ID" value="ABR58905.1"/>
    <property type="molecule type" value="Genomic_DNA"/>
</dbReference>
<dbReference type="RefSeq" id="WP_003527670.1">
    <property type="nucleotide sequence ID" value="NC_009636.1"/>
</dbReference>
<dbReference type="RefSeq" id="YP_001325740.1">
    <property type="nucleotide sequence ID" value="NC_009636.1"/>
</dbReference>
<dbReference type="SMR" id="A6U5H5"/>
<dbReference type="STRING" id="366394.Smed_0045"/>
<dbReference type="KEGG" id="smd:Smed_0045"/>
<dbReference type="PATRIC" id="fig|366394.8.peg.3099"/>
<dbReference type="eggNOG" id="COG1396">
    <property type="taxonomic scope" value="Bacteria"/>
</dbReference>
<dbReference type="HOGENOM" id="CLU_066192_26_0_5"/>
<dbReference type="OrthoDB" id="9797172at2"/>
<dbReference type="Proteomes" id="UP000001108">
    <property type="component" value="Chromosome"/>
</dbReference>
<dbReference type="GO" id="GO:0003677">
    <property type="term" value="F:DNA binding"/>
    <property type="evidence" value="ECO:0007669"/>
    <property type="project" value="UniProtKB-KW"/>
</dbReference>
<dbReference type="CDD" id="cd00093">
    <property type="entry name" value="HTH_XRE"/>
    <property type="match status" value="1"/>
</dbReference>
<dbReference type="Gene3D" id="1.10.260.40">
    <property type="entry name" value="lambda repressor-like DNA-binding domains"/>
    <property type="match status" value="1"/>
</dbReference>
<dbReference type="InterPro" id="IPR001387">
    <property type="entry name" value="Cro/C1-type_HTH"/>
</dbReference>
<dbReference type="InterPro" id="IPR010982">
    <property type="entry name" value="Lambda_DNA-bd_dom_sf"/>
</dbReference>
<dbReference type="Pfam" id="PF01381">
    <property type="entry name" value="HTH_3"/>
    <property type="match status" value="1"/>
</dbReference>
<dbReference type="SMART" id="SM00530">
    <property type="entry name" value="HTH_XRE"/>
    <property type="match status" value="1"/>
</dbReference>
<dbReference type="SUPFAM" id="SSF47413">
    <property type="entry name" value="lambda repressor-like DNA-binding domains"/>
    <property type="match status" value="1"/>
</dbReference>
<dbReference type="PROSITE" id="PS50943">
    <property type="entry name" value="HTH_CROC1"/>
    <property type="match status" value="1"/>
</dbReference>
<organism>
    <name type="scientific">Sinorhizobium medicae (strain WSM419)</name>
    <name type="common">Ensifer medicae</name>
    <dbReference type="NCBI Taxonomy" id="366394"/>
    <lineage>
        <taxon>Bacteria</taxon>
        <taxon>Pseudomonadati</taxon>
        <taxon>Pseudomonadota</taxon>
        <taxon>Alphaproteobacteria</taxon>
        <taxon>Hyphomicrobiales</taxon>
        <taxon>Rhizobiaceae</taxon>
        <taxon>Sinorhizobium/Ensifer group</taxon>
        <taxon>Sinorhizobium</taxon>
    </lineage>
</organism>
<evidence type="ECO:0000255" key="1">
    <source>
        <dbReference type="PROSITE-ProRule" id="PRU00257"/>
    </source>
</evidence>
<name>Y045_SINMW</name>
<feature type="chain" id="PRO_0000310443" description="Uncharacterized HTH-type transcriptional regulator Smed_0045">
    <location>
        <begin position="1"/>
        <end position="139"/>
    </location>
</feature>
<feature type="domain" description="HTH cro/C1-type" evidence="1">
    <location>
        <begin position="19"/>
        <end position="73"/>
    </location>
</feature>
<feature type="DNA-binding region" description="H-T-H motif" evidence="1">
    <location>
        <begin position="30"/>
        <end position="49"/>
    </location>
</feature>
<accession>A6U5H5</accession>
<accession>Q52911</accession>